<dbReference type="EC" id="1.2.1.70" evidence="1"/>
<dbReference type="EMBL" id="CP000853">
    <property type="protein sequence ID" value="ABW18869.1"/>
    <property type="molecule type" value="Genomic_DNA"/>
</dbReference>
<dbReference type="RefSeq" id="WP_012159181.1">
    <property type="nucleotide sequence ID" value="NC_009922.1"/>
</dbReference>
<dbReference type="SMR" id="A8MGE1"/>
<dbReference type="STRING" id="350688.Clos_1324"/>
<dbReference type="KEGG" id="aoe:Clos_1324"/>
<dbReference type="eggNOG" id="COG0373">
    <property type="taxonomic scope" value="Bacteria"/>
</dbReference>
<dbReference type="HOGENOM" id="CLU_035113_1_1_9"/>
<dbReference type="OrthoDB" id="110209at2"/>
<dbReference type="UniPathway" id="UPA00251">
    <property type="reaction ID" value="UER00316"/>
</dbReference>
<dbReference type="Proteomes" id="UP000000269">
    <property type="component" value="Chromosome"/>
</dbReference>
<dbReference type="GO" id="GO:0008883">
    <property type="term" value="F:glutamyl-tRNA reductase activity"/>
    <property type="evidence" value="ECO:0007669"/>
    <property type="project" value="UniProtKB-UniRule"/>
</dbReference>
<dbReference type="GO" id="GO:0050661">
    <property type="term" value="F:NADP binding"/>
    <property type="evidence" value="ECO:0007669"/>
    <property type="project" value="InterPro"/>
</dbReference>
<dbReference type="GO" id="GO:0019353">
    <property type="term" value="P:protoporphyrinogen IX biosynthetic process from glutamate"/>
    <property type="evidence" value="ECO:0007669"/>
    <property type="project" value="TreeGrafter"/>
</dbReference>
<dbReference type="FunFam" id="3.30.460.30:FF:000001">
    <property type="entry name" value="Glutamyl-tRNA reductase"/>
    <property type="match status" value="1"/>
</dbReference>
<dbReference type="Gene3D" id="3.30.460.30">
    <property type="entry name" value="Glutamyl-tRNA reductase, N-terminal domain"/>
    <property type="match status" value="1"/>
</dbReference>
<dbReference type="Gene3D" id="3.40.50.720">
    <property type="entry name" value="NAD(P)-binding Rossmann-like Domain"/>
    <property type="match status" value="1"/>
</dbReference>
<dbReference type="HAMAP" id="MF_00087">
    <property type="entry name" value="Glu_tRNA_reductase"/>
    <property type="match status" value="1"/>
</dbReference>
<dbReference type="InterPro" id="IPR000343">
    <property type="entry name" value="4pyrrol_synth_GluRdtase"/>
</dbReference>
<dbReference type="InterPro" id="IPR015895">
    <property type="entry name" value="4pyrrol_synth_GluRdtase_N"/>
</dbReference>
<dbReference type="InterPro" id="IPR036343">
    <property type="entry name" value="GluRdtase_N_sf"/>
</dbReference>
<dbReference type="InterPro" id="IPR036291">
    <property type="entry name" value="NAD(P)-bd_dom_sf"/>
</dbReference>
<dbReference type="InterPro" id="IPR006151">
    <property type="entry name" value="Shikm_DH/Glu-tRNA_Rdtase"/>
</dbReference>
<dbReference type="NCBIfam" id="TIGR01035">
    <property type="entry name" value="hemA"/>
    <property type="match status" value="1"/>
</dbReference>
<dbReference type="PANTHER" id="PTHR43013">
    <property type="entry name" value="GLUTAMYL-TRNA REDUCTASE"/>
    <property type="match status" value="1"/>
</dbReference>
<dbReference type="PANTHER" id="PTHR43013:SF1">
    <property type="entry name" value="GLUTAMYL-TRNA REDUCTASE"/>
    <property type="match status" value="1"/>
</dbReference>
<dbReference type="Pfam" id="PF05201">
    <property type="entry name" value="GlutR_N"/>
    <property type="match status" value="1"/>
</dbReference>
<dbReference type="Pfam" id="PF01488">
    <property type="entry name" value="Shikimate_DH"/>
    <property type="match status" value="1"/>
</dbReference>
<dbReference type="SUPFAM" id="SSF69742">
    <property type="entry name" value="Glutamyl tRNA-reductase catalytic, N-terminal domain"/>
    <property type="match status" value="1"/>
</dbReference>
<dbReference type="SUPFAM" id="SSF51735">
    <property type="entry name" value="NAD(P)-binding Rossmann-fold domains"/>
    <property type="match status" value="1"/>
</dbReference>
<keyword id="KW-0521">NADP</keyword>
<keyword id="KW-0560">Oxidoreductase</keyword>
<keyword id="KW-0627">Porphyrin biosynthesis</keyword>
<keyword id="KW-1185">Reference proteome</keyword>
<comment type="function">
    <text evidence="1">Catalyzes the NADPH-dependent reduction of glutamyl-tRNA(Glu) to glutamate 1-semialdehyde (GSA).</text>
</comment>
<comment type="catalytic activity">
    <reaction evidence="1">
        <text>(S)-4-amino-5-oxopentanoate + tRNA(Glu) + NADP(+) = L-glutamyl-tRNA(Glu) + NADPH + H(+)</text>
        <dbReference type="Rhea" id="RHEA:12344"/>
        <dbReference type="Rhea" id="RHEA-COMP:9663"/>
        <dbReference type="Rhea" id="RHEA-COMP:9680"/>
        <dbReference type="ChEBI" id="CHEBI:15378"/>
        <dbReference type="ChEBI" id="CHEBI:57501"/>
        <dbReference type="ChEBI" id="CHEBI:57783"/>
        <dbReference type="ChEBI" id="CHEBI:58349"/>
        <dbReference type="ChEBI" id="CHEBI:78442"/>
        <dbReference type="ChEBI" id="CHEBI:78520"/>
        <dbReference type="EC" id="1.2.1.70"/>
    </reaction>
</comment>
<comment type="pathway">
    <text evidence="1">Porphyrin-containing compound metabolism; protoporphyrin-IX biosynthesis; 5-aminolevulinate from L-glutamyl-tRNA(Glu): step 1/2.</text>
</comment>
<comment type="subunit">
    <text evidence="1">Homodimer.</text>
</comment>
<comment type="domain">
    <text evidence="1">Possesses an unusual extended V-shaped dimeric structure with each monomer consisting of three distinct domains arranged along a curved 'spinal' alpha-helix. The N-terminal catalytic domain specifically recognizes the glutamate moiety of the substrate. The second domain is the NADPH-binding domain, and the third C-terminal domain is responsible for dimerization.</text>
</comment>
<comment type="miscellaneous">
    <text evidence="1">During catalysis, the active site Cys acts as a nucleophile attacking the alpha-carbonyl group of tRNA-bound glutamate with the formation of a thioester intermediate between enzyme and glutamate, and the concomitant release of tRNA(Glu). The thioester intermediate is finally reduced by direct hydride transfer from NADPH, to form the product GSA.</text>
</comment>
<comment type="similarity">
    <text evidence="1">Belongs to the glutamyl-tRNA reductase family.</text>
</comment>
<organism>
    <name type="scientific">Alkaliphilus oremlandii (strain OhILAs)</name>
    <name type="common">Clostridium oremlandii (strain OhILAs)</name>
    <dbReference type="NCBI Taxonomy" id="350688"/>
    <lineage>
        <taxon>Bacteria</taxon>
        <taxon>Bacillati</taxon>
        <taxon>Bacillota</taxon>
        <taxon>Clostridia</taxon>
        <taxon>Peptostreptococcales</taxon>
        <taxon>Natronincolaceae</taxon>
        <taxon>Alkaliphilus</taxon>
    </lineage>
</organism>
<gene>
    <name evidence="1" type="primary">hemA</name>
    <name type="ordered locus">Clos_1324</name>
</gene>
<accession>A8MGE1</accession>
<sequence length="334" mass="38048">MNIIMAGIDYKLAPIDVREGFSFTKAMMKQVYSNILKDTMIYGTVIISTCNRTEIYISCEEDFCVNPFEVLCNAAGIDFTPYEKVHRVKEGDEVIKHLCQLACGVKSQIWGEDQIITQVKNAIAVSREMRAADSYLEVMFRNAIAAAKKVKSTLILNSRENSIVHKALKIIKDQETMNIREILVIGNGEMGRLMTNVLIENGYRATMTLRQYRYHANVIPLNANTVDYSNRYEKMKDCDVVISATLSPHYTVEMENLKKIDKIPKLFIDLAVPRDIDPSIKNLPNIELYDVDGIGADEISKNHAQQLKGIERIIEKYICDYHKWCLFKEGLGCI</sequence>
<proteinExistence type="inferred from homology"/>
<reference key="1">
    <citation type="submission" date="2007-10" db="EMBL/GenBank/DDBJ databases">
        <title>Complete genome of Alkaliphilus oremlandii OhILAs.</title>
        <authorList>
            <person name="Copeland A."/>
            <person name="Lucas S."/>
            <person name="Lapidus A."/>
            <person name="Barry K."/>
            <person name="Detter J.C."/>
            <person name="Glavina del Rio T."/>
            <person name="Hammon N."/>
            <person name="Israni S."/>
            <person name="Dalin E."/>
            <person name="Tice H."/>
            <person name="Pitluck S."/>
            <person name="Chain P."/>
            <person name="Malfatti S."/>
            <person name="Shin M."/>
            <person name="Vergez L."/>
            <person name="Schmutz J."/>
            <person name="Larimer F."/>
            <person name="Land M."/>
            <person name="Hauser L."/>
            <person name="Kyrpides N."/>
            <person name="Mikhailova N."/>
            <person name="Stolz J.F."/>
            <person name="Dawson A."/>
            <person name="Fisher E."/>
            <person name="Crable B."/>
            <person name="Perera E."/>
            <person name="Lisak J."/>
            <person name="Ranganathan M."/>
            <person name="Basu P."/>
            <person name="Richardson P."/>
        </authorList>
    </citation>
    <scope>NUCLEOTIDE SEQUENCE [LARGE SCALE GENOMIC DNA]</scope>
    <source>
        <strain>OhILAs</strain>
    </source>
</reference>
<name>HEM1_ALKOO</name>
<evidence type="ECO:0000255" key="1">
    <source>
        <dbReference type="HAMAP-Rule" id="MF_00087"/>
    </source>
</evidence>
<protein>
    <recommendedName>
        <fullName evidence="1">Glutamyl-tRNA reductase</fullName>
        <shortName evidence="1">GluTR</shortName>
        <ecNumber evidence="1">1.2.1.70</ecNumber>
    </recommendedName>
</protein>
<feature type="chain" id="PRO_1000057568" description="Glutamyl-tRNA reductase">
    <location>
        <begin position="1"/>
        <end position="334"/>
    </location>
</feature>
<feature type="active site" description="Nucleophile" evidence="1">
    <location>
        <position position="50"/>
    </location>
</feature>
<feature type="binding site" evidence="1">
    <location>
        <begin position="49"/>
        <end position="52"/>
    </location>
    <ligand>
        <name>substrate</name>
    </ligand>
</feature>
<feature type="binding site" evidence="1">
    <location>
        <position position="107"/>
    </location>
    <ligand>
        <name>substrate</name>
    </ligand>
</feature>
<feature type="binding site" evidence="1">
    <location>
        <begin position="112"/>
        <end position="114"/>
    </location>
    <ligand>
        <name>substrate</name>
    </ligand>
</feature>
<feature type="binding site" evidence="1">
    <location>
        <position position="118"/>
    </location>
    <ligand>
        <name>substrate</name>
    </ligand>
</feature>
<feature type="binding site" evidence="1">
    <location>
        <begin position="186"/>
        <end position="191"/>
    </location>
    <ligand>
        <name>NADP(+)</name>
        <dbReference type="ChEBI" id="CHEBI:58349"/>
    </ligand>
</feature>
<feature type="site" description="Important for activity" evidence="1">
    <location>
        <position position="97"/>
    </location>
</feature>